<keyword id="KW-1185">Reference proteome</keyword>
<keyword id="KW-0687">Ribonucleoprotein</keyword>
<keyword id="KW-0689">Ribosomal protein</keyword>
<feature type="chain" id="PRO_1000127127" description="Small ribosomal subunit protein uS10">
    <location>
        <begin position="1"/>
        <end position="102"/>
    </location>
</feature>
<reference key="1">
    <citation type="journal article" date="2008" name="DNA Res.">
        <title>Complete genome sequence of Finegoldia magna, an anaerobic opportunistic pathogen.</title>
        <authorList>
            <person name="Goto T."/>
            <person name="Yamashita A."/>
            <person name="Hirakawa H."/>
            <person name="Matsutani M."/>
            <person name="Todo K."/>
            <person name="Ohshima K."/>
            <person name="Toh H."/>
            <person name="Miyamoto K."/>
            <person name="Kuhara S."/>
            <person name="Hattori M."/>
            <person name="Shimizu T."/>
            <person name="Akimoto S."/>
        </authorList>
    </citation>
    <scope>NUCLEOTIDE SEQUENCE [LARGE SCALE GENOMIC DNA]</scope>
    <source>
        <strain>ATCC 29328 / DSM 20472 / WAL 2508</strain>
    </source>
</reference>
<comment type="function">
    <text evidence="1">Involved in the binding of tRNA to the ribosomes.</text>
</comment>
<comment type="subunit">
    <text evidence="1">Part of the 30S ribosomal subunit.</text>
</comment>
<comment type="similarity">
    <text evidence="1">Belongs to the universal ribosomal protein uS10 family.</text>
</comment>
<organism>
    <name type="scientific">Finegoldia magna (strain ATCC 29328 / DSM 20472 / WAL 2508)</name>
    <name type="common">Peptostreptococcus magnus</name>
    <dbReference type="NCBI Taxonomy" id="334413"/>
    <lineage>
        <taxon>Bacteria</taxon>
        <taxon>Bacillati</taxon>
        <taxon>Bacillota</taxon>
        <taxon>Tissierellia</taxon>
        <taxon>Tissierellales</taxon>
        <taxon>Peptoniphilaceae</taxon>
        <taxon>Finegoldia</taxon>
    </lineage>
</organism>
<proteinExistence type="inferred from homology"/>
<name>RS10_FINM2</name>
<dbReference type="EMBL" id="AP008971">
    <property type="protein sequence ID" value="BAG07572.1"/>
    <property type="molecule type" value="Genomic_DNA"/>
</dbReference>
<dbReference type="RefSeq" id="WP_002836107.1">
    <property type="nucleotide sequence ID" value="NC_010376.1"/>
</dbReference>
<dbReference type="SMR" id="B0RZJ9"/>
<dbReference type="STRING" id="334413.FMG_0154"/>
<dbReference type="GeneID" id="60839389"/>
<dbReference type="KEGG" id="fma:FMG_0154"/>
<dbReference type="eggNOG" id="COG0051">
    <property type="taxonomic scope" value="Bacteria"/>
</dbReference>
<dbReference type="HOGENOM" id="CLU_122625_1_3_9"/>
<dbReference type="Proteomes" id="UP000001319">
    <property type="component" value="Chromosome"/>
</dbReference>
<dbReference type="GO" id="GO:1990904">
    <property type="term" value="C:ribonucleoprotein complex"/>
    <property type="evidence" value="ECO:0007669"/>
    <property type="project" value="UniProtKB-KW"/>
</dbReference>
<dbReference type="GO" id="GO:0005840">
    <property type="term" value="C:ribosome"/>
    <property type="evidence" value="ECO:0007669"/>
    <property type="project" value="UniProtKB-KW"/>
</dbReference>
<dbReference type="GO" id="GO:0003735">
    <property type="term" value="F:structural constituent of ribosome"/>
    <property type="evidence" value="ECO:0007669"/>
    <property type="project" value="InterPro"/>
</dbReference>
<dbReference type="GO" id="GO:0000049">
    <property type="term" value="F:tRNA binding"/>
    <property type="evidence" value="ECO:0007669"/>
    <property type="project" value="UniProtKB-UniRule"/>
</dbReference>
<dbReference type="GO" id="GO:0006412">
    <property type="term" value="P:translation"/>
    <property type="evidence" value="ECO:0007669"/>
    <property type="project" value="UniProtKB-UniRule"/>
</dbReference>
<dbReference type="FunFam" id="3.30.70.600:FF:000001">
    <property type="entry name" value="30S ribosomal protein S10"/>
    <property type="match status" value="1"/>
</dbReference>
<dbReference type="Gene3D" id="3.30.70.600">
    <property type="entry name" value="Ribosomal protein S10 domain"/>
    <property type="match status" value="1"/>
</dbReference>
<dbReference type="HAMAP" id="MF_00508">
    <property type="entry name" value="Ribosomal_uS10"/>
    <property type="match status" value="1"/>
</dbReference>
<dbReference type="InterPro" id="IPR001848">
    <property type="entry name" value="Ribosomal_uS10"/>
</dbReference>
<dbReference type="InterPro" id="IPR018268">
    <property type="entry name" value="Ribosomal_uS10_CS"/>
</dbReference>
<dbReference type="InterPro" id="IPR027486">
    <property type="entry name" value="Ribosomal_uS10_dom"/>
</dbReference>
<dbReference type="InterPro" id="IPR036838">
    <property type="entry name" value="Ribosomal_uS10_dom_sf"/>
</dbReference>
<dbReference type="NCBIfam" id="NF001861">
    <property type="entry name" value="PRK00596.1"/>
    <property type="match status" value="1"/>
</dbReference>
<dbReference type="NCBIfam" id="TIGR01049">
    <property type="entry name" value="rpsJ_bact"/>
    <property type="match status" value="1"/>
</dbReference>
<dbReference type="PANTHER" id="PTHR11700">
    <property type="entry name" value="30S RIBOSOMAL PROTEIN S10 FAMILY MEMBER"/>
    <property type="match status" value="1"/>
</dbReference>
<dbReference type="Pfam" id="PF00338">
    <property type="entry name" value="Ribosomal_S10"/>
    <property type="match status" value="1"/>
</dbReference>
<dbReference type="PRINTS" id="PR00971">
    <property type="entry name" value="RIBOSOMALS10"/>
</dbReference>
<dbReference type="SMART" id="SM01403">
    <property type="entry name" value="Ribosomal_S10"/>
    <property type="match status" value="1"/>
</dbReference>
<dbReference type="SUPFAM" id="SSF54999">
    <property type="entry name" value="Ribosomal protein S10"/>
    <property type="match status" value="1"/>
</dbReference>
<dbReference type="PROSITE" id="PS00361">
    <property type="entry name" value="RIBOSOMAL_S10"/>
    <property type="match status" value="1"/>
</dbReference>
<gene>
    <name evidence="1" type="primary">rpsJ</name>
    <name type="ordered locus">FMG_0154</name>
</gene>
<sequence length="102" mass="11733">MANQKIRIRLRAYDHELIDQSAQKIVEAAKRTDVKVSGPIPLPTEKEVITILRAVHKYKDSREQFEQRTHKRLIDIINPNAKTLEALKKLNLPAGVDIEIKL</sequence>
<protein>
    <recommendedName>
        <fullName evidence="1">Small ribosomal subunit protein uS10</fullName>
    </recommendedName>
    <alternativeName>
        <fullName evidence="2">30S ribosomal protein S10</fullName>
    </alternativeName>
</protein>
<accession>B0RZJ9</accession>
<evidence type="ECO:0000255" key="1">
    <source>
        <dbReference type="HAMAP-Rule" id="MF_00508"/>
    </source>
</evidence>
<evidence type="ECO:0000305" key="2"/>